<organism>
    <name type="scientific">Nicotiana tabacum</name>
    <name type="common">Common tobacco</name>
    <dbReference type="NCBI Taxonomy" id="4097"/>
    <lineage>
        <taxon>Eukaryota</taxon>
        <taxon>Viridiplantae</taxon>
        <taxon>Streptophyta</taxon>
        <taxon>Embryophyta</taxon>
        <taxon>Tracheophyta</taxon>
        <taxon>Spermatophyta</taxon>
        <taxon>Magnoliopsida</taxon>
        <taxon>eudicotyledons</taxon>
        <taxon>Gunneridae</taxon>
        <taxon>Pentapetalae</taxon>
        <taxon>asterids</taxon>
        <taxon>lamiids</taxon>
        <taxon>Solanales</taxon>
        <taxon>Solanaceae</taxon>
        <taxon>Nicotianoideae</taxon>
        <taxon>Nicotianeae</taxon>
        <taxon>Nicotiana</taxon>
    </lineage>
</organism>
<dbReference type="EC" id="7.1.1.8"/>
<dbReference type="EMBL" id="M77225">
    <property type="protein sequence ID" value="AAA34112.1"/>
    <property type="molecule type" value="mRNA"/>
</dbReference>
<dbReference type="PIR" id="B41607">
    <property type="entry name" value="B41607"/>
</dbReference>
<dbReference type="SMR" id="P49729"/>
<dbReference type="STRING" id="4097.P49729"/>
<dbReference type="PaxDb" id="4097-P49729"/>
<dbReference type="Proteomes" id="UP000084051">
    <property type="component" value="Unplaced"/>
</dbReference>
<dbReference type="GO" id="GO:0005743">
    <property type="term" value="C:mitochondrial inner membrane"/>
    <property type="evidence" value="ECO:0007669"/>
    <property type="project" value="UniProtKB-SubCell"/>
</dbReference>
<dbReference type="GO" id="GO:0005739">
    <property type="term" value="C:mitochondrion"/>
    <property type="evidence" value="ECO:0000314"/>
    <property type="project" value="AgBase"/>
</dbReference>
<dbReference type="GO" id="GO:0045275">
    <property type="term" value="C:respiratory chain complex III"/>
    <property type="evidence" value="ECO:0000318"/>
    <property type="project" value="GO_Central"/>
</dbReference>
<dbReference type="GO" id="GO:0051537">
    <property type="term" value="F:2 iron, 2 sulfur cluster binding"/>
    <property type="evidence" value="ECO:0007669"/>
    <property type="project" value="UniProtKB-KW"/>
</dbReference>
<dbReference type="GO" id="GO:0046872">
    <property type="term" value="F:metal ion binding"/>
    <property type="evidence" value="ECO:0007669"/>
    <property type="project" value="UniProtKB-KW"/>
</dbReference>
<dbReference type="GO" id="GO:0016491">
    <property type="term" value="F:oxidoreductase activity"/>
    <property type="evidence" value="ECO:0000318"/>
    <property type="project" value="GO_Central"/>
</dbReference>
<dbReference type="GO" id="GO:0008121">
    <property type="term" value="F:ubiquinol-cytochrome-c reductase activity"/>
    <property type="evidence" value="ECO:0000316"/>
    <property type="project" value="AgBase"/>
</dbReference>
<dbReference type="GO" id="GO:0009060">
    <property type="term" value="P:aerobic respiration"/>
    <property type="evidence" value="ECO:0000316"/>
    <property type="project" value="AgBase"/>
</dbReference>
<dbReference type="GO" id="GO:0006122">
    <property type="term" value="P:mitochondrial electron transport, ubiquinol to cytochrome c"/>
    <property type="evidence" value="ECO:0000318"/>
    <property type="project" value="GO_Central"/>
</dbReference>
<dbReference type="GO" id="GO:0009408">
    <property type="term" value="P:response to heat"/>
    <property type="evidence" value="ECO:0000316"/>
    <property type="project" value="AgBase"/>
</dbReference>
<dbReference type="CDD" id="cd03470">
    <property type="entry name" value="Rieske_cytochrome_bc1"/>
    <property type="match status" value="1"/>
</dbReference>
<dbReference type="FunFam" id="2.102.10.10:FF:000001">
    <property type="entry name" value="Cytochrome b-c1 complex subunit Rieske, mitochondrial"/>
    <property type="match status" value="1"/>
</dbReference>
<dbReference type="Gene3D" id="2.102.10.10">
    <property type="entry name" value="Rieske [2Fe-2S] iron-sulphur domain"/>
    <property type="match status" value="1"/>
</dbReference>
<dbReference type="InterPro" id="IPR017941">
    <property type="entry name" value="Rieske_2Fe-2S"/>
</dbReference>
<dbReference type="InterPro" id="IPR036922">
    <property type="entry name" value="Rieske_2Fe-2S_sf"/>
</dbReference>
<dbReference type="InterPro" id="IPR014349">
    <property type="entry name" value="Rieske_Fe-S_prot"/>
</dbReference>
<dbReference type="InterPro" id="IPR005805">
    <property type="entry name" value="Rieske_Fe-S_prot_C"/>
</dbReference>
<dbReference type="InterPro" id="IPR004192">
    <property type="entry name" value="Rieske_TM"/>
</dbReference>
<dbReference type="InterPro" id="IPR006317">
    <property type="entry name" value="Ubiquinol_cyt_c_Rdtase_Fe-S-su"/>
</dbReference>
<dbReference type="NCBIfam" id="TIGR01416">
    <property type="entry name" value="Rieske_proteo"/>
    <property type="match status" value="1"/>
</dbReference>
<dbReference type="PANTHER" id="PTHR10134">
    <property type="entry name" value="CYTOCHROME B-C1 COMPLEX SUBUNIT RIESKE, MITOCHONDRIAL"/>
    <property type="match status" value="1"/>
</dbReference>
<dbReference type="Pfam" id="PF00355">
    <property type="entry name" value="Rieske"/>
    <property type="match status" value="1"/>
</dbReference>
<dbReference type="Pfam" id="PF02921">
    <property type="entry name" value="UCR_TM"/>
    <property type="match status" value="1"/>
</dbReference>
<dbReference type="PRINTS" id="PR00162">
    <property type="entry name" value="RIESKE"/>
</dbReference>
<dbReference type="SUPFAM" id="SSF50022">
    <property type="entry name" value="ISP domain"/>
    <property type="match status" value="1"/>
</dbReference>
<dbReference type="SUPFAM" id="SSF81502">
    <property type="entry name" value="ISP transmembrane anchor"/>
    <property type="match status" value="1"/>
</dbReference>
<dbReference type="PROSITE" id="PS51296">
    <property type="entry name" value="RIESKE"/>
    <property type="match status" value="1"/>
</dbReference>
<comment type="function">
    <text evidence="2">Component of the ubiquinol-cytochrome c oxidoreductase, a multisubunit transmembrane complex that is part of the mitochondrial electron transport chain which drives oxidative phosphorylation. The respiratory chain contains 3 multisubunit complexes succinate dehydrogenase (complex II, CII), ubiquinol-cytochrome c oxidoreductase (cytochrome b-c1 complex, complex III, CIII) and cytochrome c oxidase (complex IV, CIV), that cooperate to transfer electrons derived from NADH and succinate to molecular oxygen, creating an electrochemical gradient over the inner membrane that drives transmembrane transport and the ATP synthase. The cytochrome b-c1 complex catalyzes electron transfer from ubiquinol to cytochrome c, linking this redox reaction to translocation of protons across the mitochondrial inner membrane, with protons being carried across the membrane as hydrogens on the quinol. In the process called Q cycle, 2 protons are consumed from the matrix, 4 protons are released into the intermembrane space and 2 electrons are passed to cytochrome c. The Rieske protein is a catalytic core subunit containing a [2Fe-2S] iron-sulfur cluster. It cycles between 2 conformational states during catalysis to transfer electrons from the quinol bound in the Q(0) site in cytochrome b to cytochrome c1.</text>
</comment>
<comment type="catalytic activity">
    <reaction evidence="2">
        <text>a quinol + 2 Fe(III)-[cytochrome c](out) = a quinone + 2 Fe(II)-[cytochrome c](out) + 2 H(+)(out)</text>
        <dbReference type="Rhea" id="RHEA:11484"/>
        <dbReference type="Rhea" id="RHEA-COMP:10350"/>
        <dbReference type="Rhea" id="RHEA-COMP:14399"/>
        <dbReference type="ChEBI" id="CHEBI:15378"/>
        <dbReference type="ChEBI" id="CHEBI:24646"/>
        <dbReference type="ChEBI" id="CHEBI:29033"/>
        <dbReference type="ChEBI" id="CHEBI:29034"/>
        <dbReference type="ChEBI" id="CHEBI:132124"/>
        <dbReference type="EC" id="7.1.1.8"/>
    </reaction>
</comment>
<comment type="cofactor">
    <cofactor evidence="4">
        <name>[2Fe-2S] cluster</name>
        <dbReference type="ChEBI" id="CHEBI:190135"/>
    </cofactor>
    <text evidence="4">Binds 1 [2Fe-2S] cluster per subunit.</text>
</comment>
<comment type="subunit">
    <text evidence="2">Component of the ubiquinol-cytochrome c oxidoreductase (cytochrome b-c1 complex, complex III, CIII), a multisubunit enzyme composed of 3 respiratory subunits cytochrome b, cytochrome c1 and Rieske protein, 2 core protein subunits, and several low-molecular weight protein subunits. The complex exists as an obligatory dimer and forms supercomplexes (SCs) in the inner mitochondrial membrane with cytochrome c oxidase (complex IV, CIV).</text>
</comment>
<comment type="subcellular location">
    <subcellularLocation>
        <location evidence="2">Mitochondrion inner membrane</location>
        <topology evidence="2">Single-pass membrane protein</topology>
    </subcellularLocation>
</comment>
<comment type="miscellaneous">
    <text>The Rieske protein is a high potential 2Fe-2S protein.</text>
</comment>
<comment type="similarity">
    <text evidence="5">Belongs to the Rieske iron-sulfur protein family.</text>
</comment>
<reference key="1">
    <citation type="journal article" date="1991" name="Proc. Natl. Acad. Sci. U.S.A.">
        <title>Functional analysis in yeast of cDNA coding for the mitochondrial Rieske iron-sulfur protein of higher plants.</title>
        <authorList>
            <person name="Huang J.T."/>
            <person name="Struck F."/>
            <person name="Matzinger D.F."/>
            <person name="Levings C.S. III"/>
        </authorList>
    </citation>
    <scope>NUCLEOTIDE SEQUENCE [MRNA]</scope>
    <source>
        <tissue>Leaf</tissue>
    </source>
</reference>
<protein>
    <recommendedName>
        <fullName>Cytochrome b-c1 complex subunit Rieske-1, mitochondrial</fullName>
        <ecNumber>7.1.1.8</ecNumber>
    </recommendedName>
    <alternativeName>
        <fullName>Complex III subunit 5-1</fullName>
    </alternativeName>
    <alternativeName>
        <fullName>Rieske iron-sulfur protein 1</fullName>
        <shortName>RISP1</shortName>
    </alternativeName>
    <alternativeName>
        <fullName>Ubiquinol-cytochrome c reductase iron-sulfur subunit 1</fullName>
    </alternativeName>
</protein>
<name>UCRI1_TOBAC</name>
<accession>P49729</accession>
<evidence type="ECO:0000250" key="1"/>
<evidence type="ECO:0000250" key="2">
    <source>
        <dbReference type="UniProtKB" id="P08067"/>
    </source>
</evidence>
<evidence type="ECO:0000255" key="3"/>
<evidence type="ECO:0000255" key="4">
    <source>
        <dbReference type="PROSITE-ProRule" id="PRU00628"/>
    </source>
</evidence>
<evidence type="ECO:0000305" key="5"/>
<proteinExistence type="evidence at transcript level"/>
<feature type="transit peptide" description="Mitochondrion" evidence="1">
    <location>
        <begin position="1" status="less than"/>
        <end position="46"/>
    </location>
</feature>
<feature type="chain" id="PRO_0000030676" description="Cytochrome b-c1 complex subunit Rieske-1, mitochondrial">
    <location>
        <begin position="47"/>
        <end position="258"/>
    </location>
</feature>
<feature type="topological domain" description="Mitochondrial matrix" evidence="5">
    <location>
        <begin position="47"/>
        <end position="95"/>
    </location>
</feature>
<feature type="transmembrane region" description="Helical" evidence="3">
    <location>
        <begin position="96"/>
        <end position="118"/>
    </location>
</feature>
<feature type="topological domain" description="Mitochondrial intermembrane" evidence="5">
    <location>
        <begin position="119"/>
        <end position="258"/>
    </location>
</feature>
<feature type="domain" description="Rieske" evidence="4">
    <location>
        <begin position="161"/>
        <end position="256"/>
    </location>
</feature>
<feature type="binding site" evidence="4">
    <location>
        <position position="201"/>
    </location>
    <ligand>
        <name>[2Fe-2S] cluster</name>
        <dbReference type="ChEBI" id="CHEBI:190135"/>
    </ligand>
</feature>
<feature type="binding site" evidence="4">
    <location>
        <position position="203"/>
    </location>
    <ligand>
        <name>[2Fe-2S] cluster</name>
        <dbReference type="ChEBI" id="CHEBI:190135"/>
    </ligand>
</feature>
<feature type="binding site" evidence="4">
    <location>
        <position position="220"/>
    </location>
    <ligand>
        <name>[2Fe-2S] cluster</name>
        <dbReference type="ChEBI" id="CHEBI:190135"/>
    </ligand>
</feature>
<feature type="binding site" evidence="4">
    <location>
        <position position="223"/>
    </location>
    <ligand>
        <name>[2Fe-2S] cluster</name>
        <dbReference type="ChEBI" id="CHEBI:190135"/>
    </ligand>
</feature>
<feature type="disulfide bond" evidence="4">
    <location>
        <begin position="206"/>
        <end position="222"/>
    </location>
</feature>
<feature type="non-terminal residue">
    <location>
        <position position="1"/>
    </location>
</feature>
<sequence>WPVRSAAPSSSAFISANHFSSDDDSSSPRSISPSLASVFLHHTRGFSSNSVSPAHDMGLVPDLPPTVAAIKNPTSKIVYDEHNHERYPPGDPSKRAFAYFVLTGGRFVYASLMRLLILKFVLSMSASKDVLALASLEVDLSSIEPGTTVTVKWRGKPVFIRRRTEDDISLANSVDLGSLRDPQQDAERVKNPEWLVVIGVCTHLGCIPLPNAGDFGGWFCPCHGSHYDISGRIRKGPAPYNLEVPTYSFLEENKLLIG</sequence>
<keyword id="KW-0001">2Fe-2S</keyword>
<keyword id="KW-1015">Disulfide bond</keyword>
<keyword id="KW-0249">Electron transport</keyword>
<keyword id="KW-0408">Iron</keyword>
<keyword id="KW-0411">Iron-sulfur</keyword>
<keyword id="KW-0472">Membrane</keyword>
<keyword id="KW-0479">Metal-binding</keyword>
<keyword id="KW-0496">Mitochondrion</keyword>
<keyword id="KW-0999">Mitochondrion inner membrane</keyword>
<keyword id="KW-1185">Reference proteome</keyword>
<keyword id="KW-0679">Respiratory chain</keyword>
<keyword id="KW-0809">Transit peptide</keyword>
<keyword id="KW-1278">Translocase</keyword>
<keyword id="KW-0812">Transmembrane</keyword>
<keyword id="KW-1133">Transmembrane helix</keyword>
<keyword id="KW-0813">Transport</keyword>